<organism>
    <name type="scientific">Homo sapiens</name>
    <name type="common">Human</name>
    <dbReference type="NCBI Taxonomy" id="9606"/>
    <lineage>
        <taxon>Eukaryota</taxon>
        <taxon>Metazoa</taxon>
        <taxon>Chordata</taxon>
        <taxon>Craniata</taxon>
        <taxon>Vertebrata</taxon>
        <taxon>Euteleostomi</taxon>
        <taxon>Mammalia</taxon>
        <taxon>Eutheria</taxon>
        <taxon>Euarchontoglires</taxon>
        <taxon>Primates</taxon>
        <taxon>Haplorrhini</taxon>
        <taxon>Catarrhini</taxon>
        <taxon>Hominidae</taxon>
        <taxon>Homo</taxon>
    </lineage>
</organism>
<dbReference type="EMBL" id="AB023223">
    <property type="protein sequence ID" value="BAA76850.1"/>
    <property type="status" value="ALT_INIT"/>
    <property type="molecule type" value="mRNA"/>
</dbReference>
<dbReference type="EMBL" id="BC022029">
    <property type="protein sequence ID" value="AAH22029.1"/>
    <property type="molecule type" value="mRNA"/>
</dbReference>
<dbReference type="EMBL" id="BC037531">
    <property type="protein sequence ID" value="AAH37531.1"/>
    <property type="molecule type" value="mRNA"/>
</dbReference>
<dbReference type="CCDS" id="CCDS43137.1">
    <molecule id="Q9Y2K9-1"/>
</dbReference>
<dbReference type="RefSeq" id="NP_001335272.1">
    <molecule id="Q9Y2K9-1"/>
    <property type="nucleotide sequence ID" value="NM_001348343.2"/>
</dbReference>
<dbReference type="RefSeq" id="NP_055795.1">
    <molecule id="Q9Y2K9-1"/>
    <property type="nucleotide sequence ID" value="NM_014980.3"/>
</dbReference>
<dbReference type="RefSeq" id="XP_006713888.1">
    <molecule id="Q9Y2K9-1"/>
    <property type="nucleotide sequence ID" value="XM_006713825.4"/>
</dbReference>
<dbReference type="RefSeq" id="XP_054204445.1">
    <molecule id="Q9Y2K9-1"/>
    <property type="nucleotide sequence ID" value="XM_054348470.1"/>
</dbReference>
<dbReference type="SMR" id="Q9Y2K9"/>
<dbReference type="BioGRID" id="114892">
    <property type="interactions" value="253"/>
</dbReference>
<dbReference type="FunCoup" id="Q9Y2K9">
    <property type="interactions" value="1541"/>
</dbReference>
<dbReference type="IntAct" id="Q9Y2K9">
    <property type="interactions" value="5"/>
</dbReference>
<dbReference type="STRING" id="9606.ENSP00000273666"/>
<dbReference type="iPTMnet" id="Q9Y2K9"/>
<dbReference type="PhosphoSitePlus" id="Q9Y2K9"/>
<dbReference type="BioMuta" id="STXBP5L"/>
<dbReference type="DMDM" id="82582271"/>
<dbReference type="jPOST" id="Q9Y2K9"/>
<dbReference type="MassIVE" id="Q9Y2K9"/>
<dbReference type="PaxDb" id="9606-ENSP00000273666"/>
<dbReference type="PeptideAtlas" id="Q9Y2K9"/>
<dbReference type="ProteomicsDB" id="85830">
    <molecule id="Q9Y2K9-1"/>
</dbReference>
<dbReference type="ProteomicsDB" id="85831">
    <molecule id="Q9Y2K9-2"/>
</dbReference>
<dbReference type="Antibodypedia" id="32817">
    <property type="antibodies" value="6 antibodies from 5 providers"/>
</dbReference>
<dbReference type="DNASU" id="9515"/>
<dbReference type="Ensembl" id="ENST00000273666.10">
    <molecule id="Q9Y2K9-1"/>
    <property type="protein sequence ID" value="ENSP00000273666.6"/>
    <property type="gene ID" value="ENSG00000145087.14"/>
</dbReference>
<dbReference type="Ensembl" id="ENST00000461772.5">
    <molecule id="Q9Y2K9-2"/>
    <property type="protein sequence ID" value="ENSP00000420642.1"/>
    <property type="gene ID" value="ENSG00000145087.14"/>
</dbReference>
<dbReference type="Ensembl" id="ENST00000707001.1">
    <molecule id="Q9Y2K9-1"/>
    <property type="protein sequence ID" value="ENSP00000516710.1"/>
    <property type="gene ID" value="ENSG00000145087.14"/>
</dbReference>
<dbReference type="GeneID" id="9515"/>
<dbReference type="KEGG" id="hsa:9515"/>
<dbReference type="UCSC" id="uc003eec.5">
    <molecule id="Q9Y2K9-1"/>
    <property type="organism name" value="human"/>
</dbReference>
<dbReference type="AGR" id="HGNC:30757"/>
<dbReference type="CTD" id="9515"/>
<dbReference type="DisGeNET" id="9515"/>
<dbReference type="GeneCards" id="STXBP5L"/>
<dbReference type="HGNC" id="HGNC:30757">
    <property type="gene designation" value="STXBP5L"/>
</dbReference>
<dbReference type="HPA" id="ENSG00000145087">
    <property type="expression patterns" value="Tissue enhanced (brain, thyroid gland)"/>
</dbReference>
<dbReference type="MalaCards" id="STXBP5L"/>
<dbReference type="MIM" id="609381">
    <property type="type" value="gene"/>
</dbReference>
<dbReference type="neXtProt" id="NX_Q9Y2K9"/>
<dbReference type="OpenTargets" id="ENSG00000145087"/>
<dbReference type="PharmGKB" id="PA134976391"/>
<dbReference type="VEuPathDB" id="HostDB:ENSG00000145087"/>
<dbReference type="eggNOG" id="KOG1983">
    <property type="taxonomic scope" value="Eukaryota"/>
</dbReference>
<dbReference type="GeneTree" id="ENSGT00950000182906"/>
<dbReference type="HOGENOM" id="CLU_2891755_0_0_1"/>
<dbReference type="InParanoid" id="Q9Y2K9"/>
<dbReference type="OrthoDB" id="19944at2759"/>
<dbReference type="PAN-GO" id="Q9Y2K9">
    <property type="GO annotations" value="8 GO annotations based on evolutionary models"/>
</dbReference>
<dbReference type="PhylomeDB" id="Q9Y2K9"/>
<dbReference type="TreeFam" id="TF314585"/>
<dbReference type="PathwayCommons" id="Q9Y2K9"/>
<dbReference type="SignaLink" id="Q9Y2K9"/>
<dbReference type="BioGRID-ORCS" id="9515">
    <property type="hits" value="16 hits in 1151 CRISPR screens"/>
</dbReference>
<dbReference type="ChiTaRS" id="STXBP5L">
    <property type="organism name" value="human"/>
</dbReference>
<dbReference type="GenomeRNAi" id="9515"/>
<dbReference type="Pharos" id="Q9Y2K9">
    <property type="development level" value="Tbio"/>
</dbReference>
<dbReference type="PRO" id="PR:Q9Y2K9"/>
<dbReference type="Proteomes" id="UP000005640">
    <property type="component" value="Chromosome 3"/>
</dbReference>
<dbReference type="RNAct" id="Q9Y2K9">
    <property type="molecule type" value="protein"/>
</dbReference>
<dbReference type="Bgee" id="ENSG00000145087">
    <property type="expression patterns" value="Expressed in Brodmann (1909) area 23 and 105 other cell types or tissues"/>
</dbReference>
<dbReference type="ExpressionAtlas" id="Q9Y2K9">
    <property type="expression patterns" value="baseline and differential"/>
</dbReference>
<dbReference type="GO" id="GO:0005737">
    <property type="term" value="C:cytoplasm"/>
    <property type="evidence" value="ECO:0000318"/>
    <property type="project" value="GO_Central"/>
</dbReference>
<dbReference type="GO" id="GO:0005886">
    <property type="term" value="C:plasma membrane"/>
    <property type="evidence" value="ECO:0000318"/>
    <property type="project" value="GO_Central"/>
</dbReference>
<dbReference type="GO" id="GO:0031201">
    <property type="term" value="C:SNARE complex"/>
    <property type="evidence" value="ECO:0000318"/>
    <property type="project" value="GO_Central"/>
</dbReference>
<dbReference type="GO" id="GO:0005096">
    <property type="term" value="F:GTPase activator activity"/>
    <property type="evidence" value="ECO:0000318"/>
    <property type="project" value="GO_Central"/>
</dbReference>
<dbReference type="GO" id="GO:0045159">
    <property type="term" value="F:myosin II binding"/>
    <property type="evidence" value="ECO:0000318"/>
    <property type="project" value="GO_Central"/>
</dbReference>
<dbReference type="GO" id="GO:0019905">
    <property type="term" value="F:syntaxin binding"/>
    <property type="evidence" value="ECO:0000318"/>
    <property type="project" value="GO_Central"/>
</dbReference>
<dbReference type="GO" id="GO:0006887">
    <property type="term" value="P:exocytosis"/>
    <property type="evidence" value="ECO:0000318"/>
    <property type="project" value="GO_Central"/>
</dbReference>
<dbReference type="GO" id="GO:0006893">
    <property type="term" value="P:Golgi to plasma membrane transport"/>
    <property type="evidence" value="ECO:0000318"/>
    <property type="project" value="GO_Central"/>
</dbReference>
<dbReference type="GO" id="GO:0015031">
    <property type="term" value="P:protein transport"/>
    <property type="evidence" value="ECO:0007669"/>
    <property type="project" value="UniProtKB-KW"/>
</dbReference>
<dbReference type="CDD" id="cd15893">
    <property type="entry name" value="R-SNARE_STXBP5"/>
    <property type="match status" value="1"/>
</dbReference>
<dbReference type="FunFam" id="1.20.5.110:FF:000001">
    <property type="entry name" value="syntaxin-binding protein 5 isoform X1"/>
    <property type="match status" value="1"/>
</dbReference>
<dbReference type="FunFam" id="2.130.10.10:FF:000521">
    <property type="entry name" value="syntaxin-binding protein 5-like isoform X1"/>
    <property type="match status" value="1"/>
</dbReference>
<dbReference type="Gene3D" id="1.20.5.110">
    <property type="match status" value="1"/>
</dbReference>
<dbReference type="Gene3D" id="2.130.10.10">
    <property type="entry name" value="YVTN repeat-like/Quinoprotein amine dehydrogenase"/>
    <property type="match status" value="2"/>
</dbReference>
<dbReference type="InterPro" id="IPR000664">
    <property type="entry name" value="Lethal2_giant"/>
</dbReference>
<dbReference type="InterPro" id="IPR013905">
    <property type="entry name" value="Lgl_C_dom"/>
</dbReference>
<dbReference type="InterPro" id="IPR013577">
    <property type="entry name" value="LLGL2"/>
</dbReference>
<dbReference type="InterPro" id="IPR042855">
    <property type="entry name" value="V_SNARE_CC"/>
</dbReference>
<dbReference type="InterPro" id="IPR015943">
    <property type="entry name" value="WD40/YVTN_repeat-like_dom_sf"/>
</dbReference>
<dbReference type="InterPro" id="IPR019775">
    <property type="entry name" value="WD40_repeat_CS"/>
</dbReference>
<dbReference type="InterPro" id="IPR036322">
    <property type="entry name" value="WD40_repeat_dom_sf"/>
</dbReference>
<dbReference type="InterPro" id="IPR001680">
    <property type="entry name" value="WD40_rpt"/>
</dbReference>
<dbReference type="PANTHER" id="PTHR10241">
    <property type="entry name" value="LETHAL 2 GIANT LARVAE PROTEIN"/>
    <property type="match status" value="1"/>
</dbReference>
<dbReference type="PANTHER" id="PTHR10241:SF19">
    <property type="entry name" value="SYNTAXIN-BINDING PROTEIN 5-LIKE"/>
    <property type="match status" value="1"/>
</dbReference>
<dbReference type="Pfam" id="PF08596">
    <property type="entry name" value="Lgl_C"/>
    <property type="match status" value="1"/>
</dbReference>
<dbReference type="Pfam" id="PF08366">
    <property type="entry name" value="LLGL"/>
    <property type="match status" value="1"/>
</dbReference>
<dbReference type="Pfam" id="PF00400">
    <property type="entry name" value="WD40"/>
    <property type="match status" value="1"/>
</dbReference>
<dbReference type="PRINTS" id="PR00962">
    <property type="entry name" value="LETHAL2GIANT"/>
</dbReference>
<dbReference type="SMART" id="SM00320">
    <property type="entry name" value="WD40"/>
    <property type="match status" value="6"/>
</dbReference>
<dbReference type="SUPFAM" id="SSF58038">
    <property type="entry name" value="SNARE fusion complex"/>
    <property type="match status" value="1"/>
</dbReference>
<dbReference type="SUPFAM" id="SSF50978">
    <property type="entry name" value="WD40 repeat-like"/>
    <property type="match status" value="2"/>
</dbReference>
<dbReference type="PROSITE" id="PS50892">
    <property type="entry name" value="V_SNARE"/>
    <property type="match status" value="1"/>
</dbReference>
<dbReference type="PROSITE" id="PS00678">
    <property type="entry name" value="WD_REPEATS_1"/>
    <property type="match status" value="3"/>
</dbReference>
<dbReference type="PROSITE" id="PS50082">
    <property type="entry name" value="WD_REPEATS_2"/>
    <property type="match status" value="2"/>
</dbReference>
<dbReference type="PROSITE" id="PS50294">
    <property type="entry name" value="WD_REPEATS_REGION"/>
    <property type="match status" value="1"/>
</dbReference>
<sequence>MKKFNFRKVLDGLTASSPGSGSSSGSNSGGGAGSGSVHPAGTAGVLREEIQETLTSEYFQICKTVRHGFPHQPTALAFDPVQKILAIGTRTGAIRILGRPGVDCYCQHESGAAVLQLQFLINEGALVSASSDDTLHLWNLRQKRPAILHSLKFNRERITYCHLPFQSKWLYVGTERGNTHIVNIESFILSGYVIMWNKAIELSTKTHPGPVVHLSDSPRDEGKLLIGYENGTVVFWDLKSKRAELRVYYDEAIHSIDWHHEGKQFMCSHSDGSLTLWNLKSPSRPFQTTIPHGKSQREGRKSESCKPILKVEYKTCKNSEPFIIFSGGLSYDKACRRPSLTIMHGKAITVLEMDHPIVEFLTLCETPYPNEFQEPYAVVVLLEKDLIVVDLTQSNFPIFENPYPMDIHESPVTCTAYFADCPPDLILVLYSIGVKHKKQGYSNKEWPISGGAWNLGAQTYPEIIITGHADGSIKFWDASAITLQMLYKLKTSKVFEKQKVGEGKQTCEIVEEDPFAIQMIYWCPESRIFCVSGVSAYVIIYKFSRHEITTEIVSLEVRLQYDVEDIITPEPETSPPFPDLSAQLPSSRSLSGSTNTVASEGVTKDSIPCLNVKTRPVRMPPGYQAELVIQLVWVDGEPPQQITSLAVSSAYGIVAFGNCNGLAVVDFIQKTVLLSMGTIDLYRSSDLYQRQPRSPRKNKQFIADNFCMRGLSNFYPDLTKRIRTSYQSLTELNDSPVPLELERCKSPTSDHVNGHCTSPTSQSCSSGKRLSSADVSKVNRWGPGRPPFRKAQSAACMEISLPVTTEENRENSYNRSRSSSISSIDKDSKEAITALYFMDSFARKNDSTISPCLFVGTSLGMVLIISLNLPLADEQRFTEPVMVLPSGTFLSLKGAVLTFSCMDRMGGLMQPPYEVWRDPNNIDENEKSWRRKVVMNSSSASQEIGDHQYTIICSEKQAKVFSLPSQTCLYVHNITETSFILQANVVVMCSSACLACFCANGHIMIMSLPSLRPMLDVNYLPLTDMRIARTFCFTNEGQALYLVSPTEIQRLTYSQEMCDNLQDMLGDLFTPIETPEAQNRGFLKGLFGGSGQTFDREELFGEASAGKASRSLAQHIPGPGSIEGMKGAAGGVMGELTRARIALDERGQRLGELEEKTAGMMTSAEAFSKHAHELMLKYKDKKWYQF</sequence>
<proteinExistence type="evidence at protein level"/>
<protein>
    <recommendedName>
        <fullName>Syntaxin-binding protein 5-like</fullName>
    </recommendedName>
    <alternativeName>
        <fullName>Lethal(2) giant larvae protein homolog 4</fullName>
    </alternativeName>
    <alternativeName>
        <fullName>Tomosyn-2</fullName>
    </alternativeName>
</protein>
<feature type="chain" id="PRO_0000051247" description="Syntaxin-binding protein 5-like">
    <location>
        <begin position="1"/>
        <end position="1186"/>
    </location>
</feature>
<feature type="repeat" description="WD 1">
    <location>
        <begin position="74"/>
        <end position="107"/>
    </location>
</feature>
<feature type="repeat" description="WD 2">
    <location>
        <begin position="114"/>
        <end position="153"/>
    </location>
</feature>
<feature type="repeat" description="WD 3">
    <location>
        <begin position="158"/>
        <end position="194"/>
    </location>
</feature>
<feature type="repeat" description="WD 4">
    <location>
        <begin position="213"/>
        <end position="247"/>
    </location>
</feature>
<feature type="repeat" description="WD 5">
    <location>
        <begin position="253"/>
        <end position="285"/>
    </location>
</feature>
<feature type="repeat" description="WD 6">
    <location>
        <begin position="307"/>
        <end position="349"/>
    </location>
</feature>
<feature type="repeat" description="WD 7">
    <location>
        <begin position="357"/>
        <end position="391"/>
    </location>
</feature>
<feature type="repeat" description="WD 8">
    <location>
        <begin position="413"/>
        <end position="490"/>
    </location>
</feature>
<feature type="repeat" description="WD 9">
    <location>
        <begin position="518"/>
        <end position="629"/>
    </location>
</feature>
<feature type="repeat" description="WD 10">
    <location>
        <begin position="643"/>
        <end position="705"/>
    </location>
</feature>
<feature type="repeat" description="WD 11">
    <location>
        <begin position="832"/>
        <end position="889"/>
    </location>
</feature>
<feature type="repeat" description="WD 12">
    <location>
        <begin position="898"/>
        <end position="969"/>
    </location>
</feature>
<feature type="repeat" description="WD 13">
    <location>
        <begin position="974"/>
        <end position="1018"/>
    </location>
</feature>
<feature type="repeat" description="WD 14">
    <location>
        <begin position="1032"/>
        <end position="1055"/>
    </location>
</feature>
<feature type="domain" description="v-SNARE coiled-coil homology" evidence="2">
    <location>
        <begin position="1121"/>
        <end position="1181"/>
    </location>
</feature>
<feature type="region of interest" description="Disordered" evidence="3">
    <location>
        <begin position="15"/>
        <end position="40"/>
    </location>
</feature>
<feature type="region of interest" description="Disordered" evidence="3">
    <location>
        <begin position="748"/>
        <end position="771"/>
    </location>
</feature>
<feature type="compositionally biased region" description="Low complexity" evidence="3">
    <location>
        <begin position="16"/>
        <end position="26"/>
    </location>
</feature>
<feature type="compositionally biased region" description="Polar residues" evidence="3">
    <location>
        <begin position="748"/>
        <end position="769"/>
    </location>
</feature>
<feature type="modified residue" description="N-acetylmethionine" evidence="8">
    <location>
        <position position="1"/>
    </location>
</feature>
<feature type="modified residue" description="Phosphothreonine" evidence="1">
    <location>
        <position position="568"/>
    </location>
</feature>
<feature type="modified residue" description="Phosphoserine" evidence="1">
    <location>
        <position position="574"/>
    </location>
</feature>
<feature type="modified residue" description="Phosphoserine" evidence="1">
    <location>
        <position position="589"/>
    </location>
</feature>
<feature type="modified residue" description="Phosphoserine" evidence="1">
    <location>
        <position position="593"/>
    </location>
</feature>
<feature type="modified residue" description="Phosphothreonine" evidence="1">
    <location>
        <position position="596"/>
    </location>
</feature>
<feature type="modified residue" description="Phosphoserine" evidence="1">
    <location>
        <position position="599"/>
    </location>
</feature>
<feature type="modified residue" description="Omega-N-methylarginine" evidence="1">
    <location>
        <position position="709"/>
    </location>
</feature>
<feature type="modified residue" description="Phosphoserine" evidence="1">
    <location>
        <position position="763"/>
    </location>
</feature>
<feature type="modified residue" description="Phosphoserine" evidence="1">
    <location>
        <position position="765"/>
    </location>
</feature>
<feature type="modified residue" description="Phosphoserine" evidence="1">
    <location>
        <position position="766"/>
    </location>
</feature>
<feature type="modified residue" description="Phosphoserine" evidence="1">
    <location>
        <position position="771"/>
    </location>
</feature>
<feature type="modified residue" description="Phosphoserine" evidence="1">
    <location>
        <position position="772"/>
    </location>
</feature>
<feature type="modified residue" description="Phosphoserine" evidence="1">
    <location>
        <position position="793"/>
    </location>
</feature>
<feature type="modified residue" description="Phosphoserine" evidence="1">
    <location>
        <position position="800"/>
    </location>
</feature>
<feature type="modified residue" description="Phosphoserine" evidence="1">
    <location>
        <position position="812"/>
    </location>
</feature>
<feature type="modified residue" description="Phosphoserine" evidence="1">
    <location>
        <position position="820"/>
    </location>
</feature>
<feature type="modified residue" description="Phosphoserine" evidence="1">
    <location>
        <position position="822"/>
    </location>
</feature>
<feature type="modified residue" description="Phosphoserine" evidence="1">
    <location>
        <position position="823"/>
    </location>
</feature>
<feature type="modified residue" description="Phosphothreonine" evidence="1">
    <location>
        <position position="1093"/>
    </location>
</feature>
<feature type="splice variant" id="VSP_016293" description="In isoform 2." evidence="6">
    <original>TVRHGFPHQPT</original>
    <variation>FGMVFLISPQH</variation>
    <location>
        <begin position="64"/>
        <end position="74"/>
    </location>
</feature>
<feature type="splice variant" id="VSP_016294" description="In isoform 2." evidence="6">
    <location>
        <begin position="75"/>
        <end position="1186"/>
    </location>
</feature>
<feature type="sequence variant" id="VAR_050076" description="In dbSNP:rs17249244.">
    <original>T</original>
    <variation>S</variation>
    <location>
        <position position="568"/>
    </location>
</feature>
<feature type="sequence variant" id="VAR_050077" description="In dbSNP:rs17740066.">
    <original>V</original>
    <variation>I</variation>
    <location>
        <position position="855"/>
    </location>
</feature>
<feature type="sequence variant" id="VAR_081642" description="Found in a family with autosomal recessive infantile-onset neurodegenerative disease; uncertain significance; loss of axonal outgrowth; dbSNP:rs767675000." evidence="5">
    <original>V</original>
    <variation>I</variation>
    <location>
        <position position="1043"/>
    </location>
</feature>
<feature type="sequence conflict" description="In Ref. 2; AAH37531." evidence="7" ref="2">
    <original>S</original>
    <variation>Y</variation>
    <location>
        <position position="819"/>
    </location>
</feature>
<comment type="function">
    <text evidence="1 5">Plays a role in vesicle trafficking and exocytosis inhibition. In pancreatic beta-cells, inhibits insulin secretion probably by interacting with and regulating STX1A and STX4, key t-SNARE proteins involved in the fusion of insulin granules to the plasma membrane. Also plays a role in neurotransmitter release by inhibiting basal acetylcholine release from axon terminals and by preventing synaptic fatigue upon repetitive stimulation (By similarity). Promotes as well axonal outgrowth (PubMed:25504045).</text>
</comment>
<comment type="subunit">
    <text evidence="1">Interacts with STX1A and STX4.</text>
</comment>
<comment type="interaction">
    <interactant intactId="EBI-11294039">
        <id>Q9Y2K9</id>
    </interactant>
    <interactant intactId="EBI-347538">
        <id>Q9Y4H4</id>
        <label>GPSM3</label>
    </interactant>
    <organismsDiffer>false</organismsDiffer>
    <experiments>3</experiments>
</comment>
<comment type="interaction">
    <interactant intactId="EBI-11294039">
        <id>Q9Y2K9</id>
    </interactant>
    <interactant intactId="EBI-2691717">
        <id>Q86Y82</id>
        <label>STX12</label>
    </interactant>
    <organismsDiffer>false</organismsDiffer>
    <experiments>3</experiments>
</comment>
<comment type="interaction">
    <interactant intactId="EBI-11294039">
        <id>Q9Y2K9</id>
    </interactant>
    <interactant intactId="EBI-11956649">
        <id>P32856-2</id>
        <label>STX2</label>
    </interactant>
    <organismsDiffer>false</organismsDiffer>
    <experiments>3</experiments>
</comment>
<comment type="subcellular location">
    <subcellularLocation>
        <location evidence="7">Cytoplasm</location>
    </subcellularLocation>
    <subcellularLocation>
        <location evidence="7">Cell membrane</location>
        <topology evidence="7">Peripheral membrane protein</topology>
    </subcellularLocation>
    <subcellularLocation>
        <location evidence="7">Membrane</location>
        <topology evidence="7">Peripheral membrane protein</topology>
    </subcellularLocation>
    <text evidence="7">Cytoplasmic, and associated with vesicular membranes and the plasma membrane.</text>
</comment>
<comment type="alternative products">
    <event type="alternative splicing"/>
    <isoform>
        <id>Q9Y2K9-1</id>
        <name>1</name>
        <sequence type="displayed"/>
    </isoform>
    <isoform>
        <id>Q9Y2K9-2</id>
        <name>2</name>
        <sequence type="described" ref="VSP_016293 VSP_016294"/>
    </isoform>
</comment>
<comment type="tissue specificity">
    <text evidence="4">Detected in kidney, hippocampus and lung carcinoma.</text>
</comment>
<comment type="PTM">
    <text evidence="1">Phosphorylated, leading to STXBP5L increased turnover and subsequent de-repression of insulin secretion (By similarity). Phosphorylated on serine residues in response to glucose or phorbol esters (By similarity).</text>
</comment>
<comment type="PTM">
    <text evidence="1">Ubiquitinated by the E3 ligase SYVN1, leading to STXBP5L proteasomal degradation.</text>
</comment>
<comment type="similarity">
    <text evidence="7">Belongs to the WD repeat L(2)GL family.</text>
</comment>
<comment type="sequence caution" evidence="7">
    <conflict type="erroneous initiation">
        <sequence resource="EMBL-CDS" id="BAA76850"/>
    </conflict>
</comment>
<accession>Q9Y2K9</accession>
<accession>Q4G1B4</accession>
<accession>Q6PIC3</accession>
<name>STB5L_HUMAN</name>
<evidence type="ECO:0000250" key="1">
    <source>
        <dbReference type="UniProtKB" id="Q5DQR4"/>
    </source>
</evidence>
<evidence type="ECO:0000255" key="2">
    <source>
        <dbReference type="PROSITE-ProRule" id="PRU00290"/>
    </source>
</evidence>
<evidence type="ECO:0000256" key="3">
    <source>
        <dbReference type="SAM" id="MobiDB-lite"/>
    </source>
</evidence>
<evidence type="ECO:0000269" key="4">
    <source>
    </source>
</evidence>
<evidence type="ECO:0000269" key="5">
    <source>
    </source>
</evidence>
<evidence type="ECO:0000303" key="6">
    <source>
    </source>
</evidence>
<evidence type="ECO:0000305" key="7"/>
<evidence type="ECO:0007744" key="8">
    <source>
    </source>
</evidence>
<gene>
    <name type="primary">STXBP5L</name>
    <name type="synonym">KIAA1006</name>
    <name type="synonym">LLGL4</name>
</gene>
<reference key="1">
    <citation type="journal article" date="1999" name="DNA Res.">
        <title>Prediction of the coding sequences of unidentified human genes. XIII. The complete sequences of 100 new cDNA clones from brain which code for large proteins in vitro.</title>
        <authorList>
            <person name="Nagase T."/>
            <person name="Ishikawa K."/>
            <person name="Suyama M."/>
            <person name="Kikuno R."/>
            <person name="Hirosawa M."/>
            <person name="Miyajima N."/>
            <person name="Tanaka A."/>
            <person name="Kotani H."/>
            <person name="Nomura N."/>
            <person name="Ohara O."/>
        </authorList>
    </citation>
    <scope>NUCLEOTIDE SEQUENCE [LARGE SCALE MRNA] (ISOFORM 1)</scope>
    <source>
        <tissue>Brain</tissue>
    </source>
</reference>
<reference key="2">
    <citation type="journal article" date="2004" name="Genome Res.">
        <title>The status, quality, and expansion of the NIH full-length cDNA project: the Mammalian Gene Collection (MGC).</title>
        <authorList>
            <consortium name="The MGC Project Team"/>
        </authorList>
    </citation>
    <scope>NUCLEOTIDE SEQUENCE [LARGE SCALE MRNA] (ISOFORM 2)</scope>
    <scope>NUCLEOTIDE SEQUENCE [LARGE SCALE MRNA] OF 434-1186 (ISOFORM 1)</scope>
    <source>
        <tissue>Brain</tissue>
    </source>
</reference>
<reference key="3">
    <citation type="journal article" date="2004" name="Int. J. Oncol.">
        <title>Identification and characterization of human LLGL4 gene and mouse Llgl4 gene in silico.</title>
        <authorList>
            <person name="Katoh M."/>
            <person name="Katoh M."/>
        </authorList>
    </citation>
    <scope>TISSUE SPECIFICITY</scope>
</reference>
<reference key="4">
    <citation type="journal article" date="2012" name="Proc. Natl. Acad. Sci. U.S.A.">
        <title>N-terminal acetylome analyses and functional insights of the N-terminal acetyltransferase NatB.</title>
        <authorList>
            <person name="Van Damme P."/>
            <person name="Lasa M."/>
            <person name="Polevoda B."/>
            <person name="Gazquez C."/>
            <person name="Elosegui-Artola A."/>
            <person name="Kim D.S."/>
            <person name="De Juan-Pardo E."/>
            <person name="Demeyer K."/>
            <person name="Hole K."/>
            <person name="Larrea E."/>
            <person name="Timmerman E."/>
            <person name="Prieto J."/>
            <person name="Arnesen T."/>
            <person name="Sherman F."/>
            <person name="Gevaert K."/>
            <person name="Aldabe R."/>
        </authorList>
    </citation>
    <scope>ACETYLATION [LARGE SCALE ANALYSIS] AT MET-1</scope>
    <scope>IDENTIFICATION BY MASS SPECTROMETRY [LARGE SCALE ANALYSIS]</scope>
</reference>
<reference key="5">
    <citation type="journal article" date="2015" name="Hum. Mol. Genet.">
        <title>Homozygous mutation of STXBP5L explains an autosomal recessive infantile-onset neurodegenerative disorder.</title>
        <authorList>
            <person name="Kumar R."/>
            <person name="Corbett M.A."/>
            <person name="Smith N.J."/>
            <person name="Jolly L.A."/>
            <person name="Tan C."/>
            <person name="Keating D.J."/>
            <person name="Duffield M.D."/>
            <person name="Utsumi T."/>
            <person name="Moriya K."/>
            <person name="Smith K.R."/>
            <person name="Hoischen A."/>
            <person name="Abbott K."/>
            <person name="Harbord M.G."/>
            <person name="Compton A.G."/>
            <person name="Woenig J.A."/>
            <person name="Arts P."/>
            <person name="Kwint M."/>
            <person name="Wieskamp N."/>
            <person name="Gijsen S."/>
            <person name="Veltman J.A."/>
            <person name="Bahlo M."/>
            <person name="Gleeson J.G."/>
            <person name="Haan E."/>
            <person name="Gecz J."/>
        </authorList>
    </citation>
    <scope>FUNCTION</scope>
    <scope>VARIANT ILE-1043</scope>
    <scope>CHARACTERIZATION OF VARIANT ILE-1043</scope>
</reference>
<keyword id="KW-0007">Acetylation</keyword>
<keyword id="KW-0025">Alternative splicing</keyword>
<keyword id="KW-1003">Cell membrane</keyword>
<keyword id="KW-0175">Coiled coil</keyword>
<keyword id="KW-0963">Cytoplasm</keyword>
<keyword id="KW-0268">Exocytosis</keyword>
<keyword id="KW-0472">Membrane</keyword>
<keyword id="KW-0488">Methylation</keyword>
<keyword id="KW-0597">Phosphoprotein</keyword>
<keyword id="KW-0653">Protein transport</keyword>
<keyword id="KW-1267">Proteomics identification</keyword>
<keyword id="KW-1185">Reference proteome</keyword>
<keyword id="KW-0677">Repeat</keyword>
<keyword id="KW-0813">Transport</keyword>
<keyword id="KW-0832">Ubl conjugation</keyword>
<keyword id="KW-0853">WD repeat</keyword>